<keyword id="KW-0067">ATP-binding</keyword>
<keyword id="KW-0963">Cytoplasm</keyword>
<keyword id="KW-0227">DNA damage</keyword>
<keyword id="KW-0228">DNA excision</keyword>
<keyword id="KW-0234">DNA repair</keyword>
<keyword id="KW-0267">Excision nuclease</keyword>
<keyword id="KW-0547">Nucleotide-binding</keyword>
<keyword id="KW-1185">Reference proteome</keyword>
<keyword id="KW-0742">SOS response</keyword>
<name>UVRB_MYCTO</name>
<accession>P9WFC6</accession>
<accession>L0T7H2</accession>
<accession>O06150</accession>
<accession>P67422</accession>
<comment type="function">
    <text evidence="1">The UvrABC repair system catalyzes the recognition and processing of DNA lesions. A damage recognition complex composed of 2 UvrA and 2 UvrB subunits scans DNA for abnormalities. Upon binding of the UvrA(2)B(2) complex to a putative damaged site, the DNA wraps around one UvrB monomer. DNA wrap is dependent on ATP binding by UvrB and probably causes local melting of the DNA helix, facilitating insertion of UvrB beta-hairpin between the DNA strands. Then UvrB probes one DNA strand for the presence of a lesion. If a lesion is found the UvrA subunits dissociate and the UvrB-DNA preincision complex is formed. This complex is subsequently bound by UvrC and the second UvrB is released. If no lesion is found, the DNA wraps around the other UvrB subunit that will check the other stand for damage.</text>
</comment>
<comment type="subunit">
    <text evidence="1">Forms a heterotetramer with UvrA during the search for lesions. Interacts with UvrC in an incision complex.</text>
</comment>
<comment type="subcellular location">
    <subcellularLocation>
        <location evidence="1">Cytoplasm</location>
    </subcellularLocation>
</comment>
<comment type="domain">
    <text evidence="1">The beta-hairpin motif is involved in DNA binding.</text>
</comment>
<comment type="similarity">
    <text evidence="1">Belongs to the UvrB family.</text>
</comment>
<comment type="sequence caution" evidence="3">
    <conflict type="erroneous initiation">
        <sequence resource="EMBL-CDS" id="AAK45939"/>
    </conflict>
    <text>Extended N-terminus.</text>
</comment>
<dbReference type="EMBL" id="AE000516">
    <property type="protein sequence ID" value="AAK45939.1"/>
    <property type="status" value="ALT_INIT"/>
    <property type="molecule type" value="Genomic_DNA"/>
</dbReference>
<dbReference type="PIR" id="G70559">
    <property type="entry name" value="G70559"/>
</dbReference>
<dbReference type="RefSeq" id="WP_003911575.1">
    <property type="nucleotide sequence ID" value="NZ_KK341227.1"/>
</dbReference>
<dbReference type="SMR" id="P9WFC6"/>
<dbReference type="GeneID" id="45425602"/>
<dbReference type="KEGG" id="mtc:MT1669"/>
<dbReference type="HOGENOM" id="CLU_009621_2_1_11"/>
<dbReference type="Proteomes" id="UP000001020">
    <property type="component" value="Chromosome"/>
</dbReference>
<dbReference type="GO" id="GO:0005737">
    <property type="term" value="C:cytoplasm"/>
    <property type="evidence" value="ECO:0007669"/>
    <property type="project" value="UniProtKB-SubCell"/>
</dbReference>
<dbReference type="GO" id="GO:0009380">
    <property type="term" value="C:excinuclease repair complex"/>
    <property type="evidence" value="ECO:0007669"/>
    <property type="project" value="InterPro"/>
</dbReference>
<dbReference type="GO" id="GO:0005524">
    <property type="term" value="F:ATP binding"/>
    <property type="evidence" value="ECO:0007669"/>
    <property type="project" value="UniProtKB-UniRule"/>
</dbReference>
<dbReference type="GO" id="GO:0016887">
    <property type="term" value="F:ATP hydrolysis activity"/>
    <property type="evidence" value="ECO:0007669"/>
    <property type="project" value="InterPro"/>
</dbReference>
<dbReference type="GO" id="GO:0003677">
    <property type="term" value="F:DNA binding"/>
    <property type="evidence" value="ECO:0007669"/>
    <property type="project" value="UniProtKB-UniRule"/>
</dbReference>
<dbReference type="GO" id="GO:0009381">
    <property type="term" value="F:excinuclease ABC activity"/>
    <property type="evidence" value="ECO:0007669"/>
    <property type="project" value="UniProtKB-UniRule"/>
</dbReference>
<dbReference type="GO" id="GO:0006289">
    <property type="term" value="P:nucleotide-excision repair"/>
    <property type="evidence" value="ECO:0007669"/>
    <property type="project" value="UniProtKB-UniRule"/>
</dbReference>
<dbReference type="GO" id="GO:0009432">
    <property type="term" value="P:SOS response"/>
    <property type="evidence" value="ECO:0007669"/>
    <property type="project" value="UniProtKB-UniRule"/>
</dbReference>
<dbReference type="CDD" id="cd17916">
    <property type="entry name" value="DEXHc_UvrB"/>
    <property type="match status" value="1"/>
</dbReference>
<dbReference type="CDD" id="cd18790">
    <property type="entry name" value="SF2_C_UvrB"/>
    <property type="match status" value="1"/>
</dbReference>
<dbReference type="FunFam" id="3.40.50.300:FF:000257">
    <property type="entry name" value="UvrABC system protein B"/>
    <property type="match status" value="1"/>
</dbReference>
<dbReference type="FunFam" id="3.40.50.300:FF:000401">
    <property type="entry name" value="UvrABC system protein B"/>
    <property type="match status" value="1"/>
</dbReference>
<dbReference type="FunFam" id="3.40.50.300:FF:000477">
    <property type="entry name" value="UvrABC system protein B"/>
    <property type="match status" value="1"/>
</dbReference>
<dbReference type="FunFam" id="4.10.860.10:FF:000009">
    <property type="entry name" value="UvrABC system protein B"/>
    <property type="match status" value="1"/>
</dbReference>
<dbReference type="Gene3D" id="3.40.50.300">
    <property type="entry name" value="P-loop containing nucleotide triphosphate hydrolases"/>
    <property type="match status" value="3"/>
</dbReference>
<dbReference type="Gene3D" id="4.10.860.10">
    <property type="entry name" value="UVR domain"/>
    <property type="match status" value="1"/>
</dbReference>
<dbReference type="HAMAP" id="MF_00204">
    <property type="entry name" value="UvrB"/>
    <property type="match status" value="1"/>
</dbReference>
<dbReference type="InterPro" id="IPR006935">
    <property type="entry name" value="Helicase/UvrB_N"/>
</dbReference>
<dbReference type="InterPro" id="IPR014001">
    <property type="entry name" value="Helicase_ATP-bd"/>
</dbReference>
<dbReference type="InterPro" id="IPR001650">
    <property type="entry name" value="Helicase_C-like"/>
</dbReference>
<dbReference type="InterPro" id="IPR027417">
    <property type="entry name" value="P-loop_NTPase"/>
</dbReference>
<dbReference type="InterPro" id="IPR001943">
    <property type="entry name" value="UVR_dom"/>
</dbReference>
<dbReference type="InterPro" id="IPR036876">
    <property type="entry name" value="UVR_dom_sf"/>
</dbReference>
<dbReference type="InterPro" id="IPR004807">
    <property type="entry name" value="UvrB"/>
</dbReference>
<dbReference type="InterPro" id="IPR041471">
    <property type="entry name" value="UvrB_inter"/>
</dbReference>
<dbReference type="InterPro" id="IPR024759">
    <property type="entry name" value="UvrB_YAD/RRR_dom"/>
</dbReference>
<dbReference type="NCBIfam" id="NF003673">
    <property type="entry name" value="PRK05298.1"/>
    <property type="match status" value="1"/>
</dbReference>
<dbReference type="NCBIfam" id="TIGR00631">
    <property type="entry name" value="uvrb"/>
    <property type="match status" value="1"/>
</dbReference>
<dbReference type="PANTHER" id="PTHR24029">
    <property type="entry name" value="UVRABC SYSTEM PROTEIN B"/>
    <property type="match status" value="1"/>
</dbReference>
<dbReference type="PANTHER" id="PTHR24029:SF0">
    <property type="entry name" value="UVRABC SYSTEM PROTEIN B"/>
    <property type="match status" value="1"/>
</dbReference>
<dbReference type="Pfam" id="PF00271">
    <property type="entry name" value="Helicase_C"/>
    <property type="match status" value="1"/>
</dbReference>
<dbReference type="Pfam" id="PF04851">
    <property type="entry name" value="ResIII"/>
    <property type="match status" value="1"/>
</dbReference>
<dbReference type="Pfam" id="PF02151">
    <property type="entry name" value="UVR"/>
    <property type="match status" value="1"/>
</dbReference>
<dbReference type="Pfam" id="PF12344">
    <property type="entry name" value="UvrB"/>
    <property type="match status" value="1"/>
</dbReference>
<dbReference type="Pfam" id="PF17757">
    <property type="entry name" value="UvrB_inter"/>
    <property type="match status" value="1"/>
</dbReference>
<dbReference type="SMART" id="SM00487">
    <property type="entry name" value="DEXDc"/>
    <property type="match status" value="1"/>
</dbReference>
<dbReference type="SMART" id="SM00490">
    <property type="entry name" value="HELICc"/>
    <property type="match status" value="1"/>
</dbReference>
<dbReference type="SUPFAM" id="SSF46600">
    <property type="entry name" value="C-terminal UvrC-binding domain of UvrB"/>
    <property type="match status" value="1"/>
</dbReference>
<dbReference type="SUPFAM" id="SSF52540">
    <property type="entry name" value="P-loop containing nucleoside triphosphate hydrolases"/>
    <property type="match status" value="2"/>
</dbReference>
<dbReference type="PROSITE" id="PS51192">
    <property type="entry name" value="HELICASE_ATP_BIND_1"/>
    <property type="match status" value="1"/>
</dbReference>
<dbReference type="PROSITE" id="PS51194">
    <property type="entry name" value="HELICASE_CTER"/>
    <property type="match status" value="1"/>
</dbReference>
<dbReference type="PROSITE" id="PS50151">
    <property type="entry name" value="UVR"/>
    <property type="match status" value="1"/>
</dbReference>
<reference key="1">
    <citation type="journal article" date="2002" name="J. Bacteriol.">
        <title>Whole-genome comparison of Mycobacterium tuberculosis clinical and laboratory strains.</title>
        <authorList>
            <person name="Fleischmann R.D."/>
            <person name="Alland D."/>
            <person name="Eisen J.A."/>
            <person name="Carpenter L."/>
            <person name="White O."/>
            <person name="Peterson J.D."/>
            <person name="DeBoy R.T."/>
            <person name="Dodson R.J."/>
            <person name="Gwinn M.L."/>
            <person name="Haft D.H."/>
            <person name="Hickey E.K."/>
            <person name="Kolonay J.F."/>
            <person name="Nelson W.C."/>
            <person name="Umayam L.A."/>
            <person name="Ermolaeva M.D."/>
            <person name="Salzberg S.L."/>
            <person name="Delcher A."/>
            <person name="Utterback T.R."/>
            <person name="Weidman J.F."/>
            <person name="Khouri H.M."/>
            <person name="Gill J."/>
            <person name="Mikula A."/>
            <person name="Bishai W."/>
            <person name="Jacobs W.R. Jr."/>
            <person name="Venter J.C."/>
            <person name="Fraser C.M."/>
        </authorList>
    </citation>
    <scope>NUCLEOTIDE SEQUENCE [LARGE SCALE GENOMIC DNA]</scope>
    <source>
        <strain>CDC 1551 / Oshkosh</strain>
    </source>
</reference>
<proteinExistence type="inferred from homology"/>
<organism>
    <name type="scientific">Mycobacterium tuberculosis (strain CDC 1551 / Oshkosh)</name>
    <dbReference type="NCBI Taxonomy" id="83331"/>
    <lineage>
        <taxon>Bacteria</taxon>
        <taxon>Bacillati</taxon>
        <taxon>Actinomycetota</taxon>
        <taxon>Actinomycetes</taxon>
        <taxon>Mycobacteriales</taxon>
        <taxon>Mycobacteriaceae</taxon>
        <taxon>Mycobacterium</taxon>
        <taxon>Mycobacterium tuberculosis complex</taxon>
    </lineage>
</organism>
<sequence length="719" mass="80407">MAFATEHPVVAHSEYRAVEEIVRAGGHFEVVSPHAPAGDQPAAIDELERRINAGERDVVLLGATGTGKSATTAWLIERLQRPTLVMAPNKTLAAQLANELREMLPHNAVEYFVSYYDYYQPEAYIAQTDTYIEKDSSINDDVERLRHSATSALLSRRDVVVVASVSCIYGLGTPQSYLDRSVELKVGEEVPRDGLLRLLVDVQYTRNDMSFTRGSFRVRGDTVEIIPSYEELAVRIEFFGDEIEALYYLHPLTGEVIRQVDSLRIFPATHYVAGPERMAHAVSAIEEELAERLAELESQGKLLEAQRLRMRTNYDIEMMRQVGFCSGIENYSRHIDGRGPGTPPATLLDYFPEDFLLVIDESHVTVPQIGGMYEGDISRKRNLVEYGFRLPSACDNRPLTWEEFADRIGQTVYLSATPGPYELSQTGGEFVEQVIRPTGLVDPKVVVKPTKGQIDDLIGEIRTRADADQRVLVTTLTKKMAEDLTDYLLEMGIRVRYLHSEVDTLRRVELLRQLRLGDYDVLVGINLLREGLDLPEVSLVAILDADKEGFLRSSRSLIQTIGRAARNVSGEVHMYADKITDSMREAIDETERRRAKQIAYNEANGIDPQPLRKKIADILDQVYREADDTAVVEVGGSGRNASRGRRAQGEPGRAVSAGVFEGRDTSAMPRAELADLIKDLTAQMMAAARDLQFELAARFRDEIADLKRELRGMDAAGLK</sequence>
<protein>
    <recommendedName>
        <fullName evidence="1">UvrABC system protein B</fullName>
        <shortName evidence="1">Protein UvrB</shortName>
    </recommendedName>
    <alternativeName>
        <fullName evidence="1">Excinuclease ABC subunit B</fullName>
    </alternativeName>
</protein>
<gene>
    <name evidence="1" type="primary">uvrB</name>
    <name type="ordered locus">MT1669</name>
</gene>
<evidence type="ECO:0000255" key="1">
    <source>
        <dbReference type="HAMAP-Rule" id="MF_00204"/>
    </source>
</evidence>
<evidence type="ECO:0000256" key="2">
    <source>
        <dbReference type="SAM" id="MobiDB-lite"/>
    </source>
</evidence>
<evidence type="ECO:0000305" key="3"/>
<feature type="chain" id="PRO_0000428562" description="UvrABC system protein B">
    <location>
        <begin position="1"/>
        <end position="719"/>
    </location>
</feature>
<feature type="domain" description="Helicase ATP-binding" evidence="1">
    <location>
        <begin position="49"/>
        <end position="435"/>
    </location>
</feature>
<feature type="domain" description="Helicase C-terminal" evidence="1">
    <location>
        <begin position="453"/>
        <end position="606"/>
    </location>
</feature>
<feature type="domain" description="UVR" evidence="1">
    <location>
        <begin position="674"/>
        <end position="709"/>
    </location>
</feature>
<feature type="region of interest" description="Disordered" evidence="2">
    <location>
        <begin position="635"/>
        <end position="654"/>
    </location>
</feature>
<feature type="short sequence motif" description="Beta-hairpin">
    <location>
        <begin position="115"/>
        <end position="138"/>
    </location>
</feature>
<feature type="binding site" evidence="1">
    <location>
        <begin position="62"/>
        <end position="69"/>
    </location>
    <ligand>
        <name>ATP</name>
        <dbReference type="ChEBI" id="CHEBI:30616"/>
    </ligand>
</feature>